<keyword id="KW-0012">Acyltransferase</keyword>
<keyword id="KW-0963">Cytoplasm</keyword>
<keyword id="KW-0441">Lipid A biosynthesis</keyword>
<keyword id="KW-0444">Lipid biosynthesis</keyword>
<keyword id="KW-0443">Lipid metabolism</keyword>
<keyword id="KW-0677">Repeat</keyword>
<keyword id="KW-0808">Transferase</keyword>
<feature type="chain" id="PRO_0000302569" description="Acyl-[acyl-carrier-protein]--UDP-N-acetylglucosamine O-acyltransferase">
    <location>
        <begin position="1"/>
        <end position="279"/>
    </location>
</feature>
<feature type="region of interest" description="Disordered" evidence="2">
    <location>
        <begin position="260"/>
        <end position="279"/>
    </location>
</feature>
<evidence type="ECO:0000255" key="1">
    <source>
        <dbReference type="HAMAP-Rule" id="MF_00387"/>
    </source>
</evidence>
<evidence type="ECO:0000256" key="2">
    <source>
        <dbReference type="SAM" id="MobiDB-lite"/>
    </source>
</evidence>
<comment type="function">
    <text evidence="1">Involved in the biosynthesis of lipid A, a phosphorylated glycolipid that anchors the lipopolysaccharide to the outer membrane of the cell.</text>
</comment>
<comment type="catalytic activity">
    <reaction evidence="1">
        <text>a (3R)-hydroxyacyl-[ACP] + UDP-N-acetyl-alpha-D-glucosamine = a UDP-3-O-[(3R)-3-hydroxyacyl]-N-acetyl-alpha-D-glucosamine + holo-[ACP]</text>
        <dbReference type="Rhea" id="RHEA:67812"/>
        <dbReference type="Rhea" id="RHEA-COMP:9685"/>
        <dbReference type="Rhea" id="RHEA-COMP:9945"/>
        <dbReference type="ChEBI" id="CHEBI:57705"/>
        <dbReference type="ChEBI" id="CHEBI:64479"/>
        <dbReference type="ChEBI" id="CHEBI:78827"/>
        <dbReference type="ChEBI" id="CHEBI:173225"/>
        <dbReference type="EC" id="2.3.1.129"/>
    </reaction>
</comment>
<comment type="pathway">
    <text evidence="1">Glycolipid biosynthesis; lipid IV(A) biosynthesis; lipid IV(A) from (3R)-3-hydroxytetradecanoyl-[acyl-carrier-protein] and UDP-N-acetyl-alpha-D-glucosamine: step 1/6.</text>
</comment>
<comment type="subunit">
    <text evidence="1">Homotrimer.</text>
</comment>
<comment type="subcellular location">
    <subcellularLocation>
        <location evidence="1">Cytoplasm</location>
    </subcellularLocation>
</comment>
<comment type="similarity">
    <text evidence="1">Belongs to the transferase hexapeptide repeat family. LpxA subfamily.</text>
</comment>
<organism>
    <name type="scientific">Chlamydia abortus (strain DSM 27085 / S26/3)</name>
    <name type="common">Chlamydophila abortus</name>
    <dbReference type="NCBI Taxonomy" id="218497"/>
    <lineage>
        <taxon>Bacteria</taxon>
        <taxon>Pseudomonadati</taxon>
        <taxon>Chlamydiota</taxon>
        <taxon>Chlamydiia</taxon>
        <taxon>Chlamydiales</taxon>
        <taxon>Chlamydiaceae</taxon>
        <taxon>Chlamydia/Chlamydophila group</taxon>
        <taxon>Chlamydia</taxon>
    </lineage>
</organism>
<dbReference type="EC" id="2.3.1.129" evidence="1"/>
<dbReference type="EMBL" id="CR848038">
    <property type="protein sequence ID" value="CAH63547.1"/>
    <property type="molecule type" value="Genomic_DNA"/>
</dbReference>
<dbReference type="RefSeq" id="WP_011096823.1">
    <property type="nucleotide sequence ID" value="NC_004552.2"/>
</dbReference>
<dbReference type="SMR" id="Q5L723"/>
<dbReference type="KEGG" id="cab:CAB090"/>
<dbReference type="eggNOG" id="COG1043">
    <property type="taxonomic scope" value="Bacteria"/>
</dbReference>
<dbReference type="HOGENOM" id="CLU_061249_0_0_0"/>
<dbReference type="OrthoDB" id="9807278at2"/>
<dbReference type="UniPathway" id="UPA00359">
    <property type="reaction ID" value="UER00477"/>
</dbReference>
<dbReference type="Proteomes" id="UP000001012">
    <property type="component" value="Chromosome"/>
</dbReference>
<dbReference type="GO" id="GO:0005737">
    <property type="term" value="C:cytoplasm"/>
    <property type="evidence" value="ECO:0007669"/>
    <property type="project" value="UniProtKB-SubCell"/>
</dbReference>
<dbReference type="GO" id="GO:0016020">
    <property type="term" value="C:membrane"/>
    <property type="evidence" value="ECO:0007669"/>
    <property type="project" value="GOC"/>
</dbReference>
<dbReference type="GO" id="GO:0008780">
    <property type="term" value="F:acyl-[acyl-carrier-protein]-UDP-N-acetylglucosamine O-acyltransferase activity"/>
    <property type="evidence" value="ECO:0007669"/>
    <property type="project" value="UniProtKB-UniRule"/>
</dbReference>
<dbReference type="GO" id="GO:0009245">
    <property type="term" value="P:lipid A biosynthetic process"/>
    <property type="evidence" value="ECO:0007669"/>
    <property type="project" value="UniProtKB-UniRule"/>
</dbReference>
<dbReference type="CDD" id="cd03351">
    <property type="entry name" value="LbH_UDP-GlcNAc_AT"/>
    <property type="match status" value="1"/>
</dbReference>
<dbReference type="Gene3D" id="2.160.10.10">
    <property type="entry name" value="Hexapeptide repeat proteins"/>
    <property type="match status" value="1"/>
</dbReference>
<dbReference type="Gene3D" id="1.20.1180.10">
    <property type="entry name" value="Udp N-acetylglucosamine O-acyltransferase, C-terminal domain"/>
    <property type="match status" value="1"/>
</dbReference>
<dbReference type="HAMAP" id="MF_00387">
    <property type="entry name" value="LpxA"/>
    <property type="match status" value="1"/>
</dbReference>
<dbReference type="InterPro" id="IPR029098">
    <property type="entry name" value="Acetyltransf_C"/>
</dbReference>
<dbReference type="InterPro" id="IPR037157">
    <property type="entry name" value="Acetyltransf_C_sf"/>
</dbReference>
<dbReference type="InterPro" id="IPR001451">
    <property type="entry name" value="Hexapep"/>
</dbReference>
<dbReference type="InterPro" id="IPR018357">
    <property type="entry name" value="Hexapep_transf_CS"/>
</dbReference>
<dbReference type="InterPro" id="IPR010137">
    <property type="entry name" value="Lipid_A_LpxA"/>
</dbReference>
<dbReference type="InterPro" id="IPR011004">
    <property type="entry name" value="Trimer_LpxA-like_sf"/>
</dbReference>
<dbReference type="NCBIfam" id="TIGR01852">
    <property type="entry name" value="lipid_A_lpxA"/>
    <property type="match status" value="1"/>
</dbReference>
<dbReference type="NCBIfam" id="NF003657">
    <property type="entry name" value="PRK05289.1"/>
    <property type="match status" value="1"/>
</dbReference>
<dbReference type="PANTHER" id="PTHR43480">
    <property type="entry name" value="ACYL-[ACYL-CARRIER-PROTEIN]--UDP-N-ACETYLGLUCOSAMINE O-ACYLTRANSFERASE"/>
    <property type="match status" value="1"/>
</dbReference>
<dbReference type="PANTHER" id="PTHR43480:SF1">
    <property type="entry name" value="ACYL-[ACYL-CARRIER-PROTEIN]--UDP-N-ACETYLGLUCOSAMINE O-ACYLTRANSFERASE, MITOCHONDRIAL-RELATED"/>
    <property type="match status" value="1"/>
</dbReference>
<dbReference type="Pfam" id="PF13720">
    <property type="entry name" value="Acetyltransf_11"/>
    <property type="match status" value="1"/>
</dbReference>
<dbReference type="Pfam" id="PF00132">
    <property type="entry name" value="Hexapep"/>
    <property type="match status" value="1"/>
</dbReference>
<dbReference type="PIRSF" id="PIRSF000456">
    <property type="entry name" value="UDP-GlcNAc_acltr"/>
    <property type="match status" value="1"/>
</dbReference>
<dbReference type="SUPFAM" id="SSF51161">
    <property type="entry name" value="Trimeric LpxA-like enzymes"/>
    <property type="match status" value="1"/>
</dbReference>
<dbReference type="PROSITE" id="PS00101">
    <property type="entry name" value="HEXAPEP_TRANSFERASES"/>
    <property type="match status" value="2"/>
</dbReference>
<accession>Q5L723</accession>
<sequence length="279" mass="30603">MTNIHPTAIIEPGAKIGRNVVIEPYVVIKSTVTLCDDVVVKSYAYIDGYTTIGRGTTIWPSAMIGNKPQDLKYQGEKTYVTIGENCEIREFAIITSSTFEGTTVSIGNNCLIMPWAHVAHNCTIGNHVVLSNHAQLAGHVVVEDYAIIGGMVGVHQFVRIGAHAMVGALSGVRRDVPPYTIGTGNPYQLGGINKVGLQRRQVGFEIRLALIKVFKKVYRSEDGFFEALLEAQEEYGHIPEVQNFIHFCRNPSKRGIERGAAKEAFQEESVDKEGALVES</sequence>
<gene>
    <name evidence="1" type="primary">lpxA</name>
    <name type="ordered locus">CAB090</name>
</gene>
<name>LPXA_CHLAB</name>
<proteinExistence type="inferred from homology"/>
<reference key="1">
    <citation type="journal article" date="2005" name="Genome Res.">
        <title>The Chlamydophila abortus genome sequence reveals an array of variable proteins that contribute to interspecies variation.</title>
        <authorList>
            <person name="Thomson N.R."/>
            <person name="Yeats C."/>
            <person name="Bell K."/>
            <person name="Holden M.T.G."/>
            <person name="Bentley S.D."/>
            <person name="Livingstone M."/>
            <person name="Cerdeno-Tarraga A.-M."/>
            <person name="Harris B."/>
            <person name="Doggett J."/>
            <person name="Ormond D."/>
            <person name="Mungall K."/>
            <person name="Clarke K."/>
            <person name="Feltwell T."/>
            <person name="Hance Z."/>
            <person name="Sanders M."/>
            <person name="Quail M.A."/>
            <person name="Price C."/>
            <person name="Barrell B.G."/>
            <person name="Parkhill J."/>
            <person name="Longbottom D."/>
        </authorList>
    </citation>
    <scope>NUCLEOTIDE SEQUENCE [LARGE SCALE GENOMIC DNA]</scope>
    <source>
        <strain>DSM 27085 / S26/3</strain>
    </source>
</reference>
<protein>
    <recommendedName>
        <fullName evidence="1">Acyl-[acyl-carrier-protein]--UDP-N-acetylglucosamine O-acyltransferase</fullName>
        <shortName evidence="1">UDP-N-acetylglucosamine acyltransferase</shortName>
        <ecNumber evidence="1">2.3.1.129</ecNumber>
    </recommendedName>
</protein>